<organism>
    <name type="scientific">Shigella sonnei (strain Ss046)</name>
    <dbReference type="NCBI Taxonomy" id="300269"/>
    <lineage>
        <taxon>Bacteria</taxon>
        <taxon>Pseudomonadati</taxon>
        <taxon>Pseudomonadota</taxon>
        <taxon>Gammaproteobacteria</taxon>
        <taxon>Enterobacterales</taxon>
        <taxon>Enterobacteriaceae</taxon>
        <taxon>Shigella</taxon>
    </lineage>
</organism>
<gene>
    <name evidence="1" type="primary">yihY</name>
    <name type="ordered locus">SSON_4055</name>
</gene>
<feature type="chain" id="PRO_1000044734" description="UPF0761 membrane protein YihY">
    <location>
        <begin position="1"/>
        <end position="290"/>
    </location>
</feature>
<feature type="transmembrane region" description="Helical" evidence="1">
    <location>
        <begin position="44"/>
        <end position="64"/>
    </location>
</feature>
<feature type="transmembrane region" description="Helical" evidence="1">
    <location>
        <begin position="104"/>
        <end position="124"/>
    </location>
</feature>
<feature type="transmembrane region" description="Helical" evidence="1">
    <location>
        <begin position="140"/>
        <end position="160"/>
    </location>
</feature>
<feature type="transmembrane region" description="Helical" evidence="1">
    <location>
        <begin position="183"/>
        <end position="203"/>
    </location>
</feature>
<feature type="transmembrane region" description="Helical" evidence="1">
    <location>
        <begin position="210"/>
        <end position="230"/>
    </location>
</feature>
<feature type="transmembrane region" description="Helical" evidence="1">
    <location>
        <begin position="244"/>
        <end position="264"/>
    </location>
</feature>
<reference key="1">
    <citation type="journal article" date="2005" name="Nucleic Acids Res.">
        <title>Genome dynamics and diversity of Shigella species, the etiologic agents of bacillary dysentery.</title>
        <authorList>
            <person name="Yang F."/>
            <person name="Yang J."/>
            <person name="Zhang X."/>
            <person name="Chen L."/>
            <person name="Jiang Y."/>
            <person name="Yan Y."/>
            <person name="Tang X."/>
            <person name="Wang J."/>
            <person name="Xiong Z."/>
            <person name="Dong J."/>
            <person name="Xue Y."/>
            <person name="Zhu Y."/>
            <person name="Xu X."/>
            <person name="Sun L."/>
            <person name="Chen S."/>
            <person name="Nie H."/>
            <person name="Peng J."/>
            <person name="Xu J."/>
            <person name="Wang Y."/>
            <person name="Yuan Z."/>
            <person name="Wen Y."/>
            <person name="Yao Z."/>
            <person name="Shen Y."/>
            <person name="Qiang B."/>
            <person name="Hou Y."/>
            <person name="Yu J."/>
            <person name="Jin Q."/>
        </authorList>
    </citation>
    <scope>NUCLEOTIDE SEQUENCE [LARGE SCALE GENOMIC DNA]</scope>
    <source>
        <strain>Ss046</strain>
    </source>
</reference>
<dbReference type="EMBL" id="CP000038">
    <property type="protein sequence ID" value="AAZ90572.1"/>
    <property type="molecule type" value="Genomic_DNA"/>
</dbReference>
<dbReference type="RefSeq" id="WP_000920755.1">
    <property type="nucleotide sequence ID" value="NC_007384.1"/>
</dbReference>
<dbReference type="KEGG" id="ssn:SSON_4055"/>
<dbReference type="HOGENOM" id="CLU_032288_0_0_6"/>
<dbReference type="Proteomes" id="UP000002529">
    <property type="component" value="Chromosome"/>
</dbReference>
<dbReference type="GO" id="GO:0005886">
    <property type="term" value="C:plasma membrane"/>
    <property type="evidence" value="ECO:0007669"/>
    <property type="project" value="UniProtKB-SubCell"/>
</dbReference>
<dbReference type="HAMAP" id="MF_00672">
    <property type="entry name" value="UPF0761"/>
    <property type="match status" value="1"/>
</dbReference>
<dbReference type="InterPro" id="IPR023679">
    <property type="entry name" value="UPF0761_bac"/>
</dbReference>
<dbReference type="InterPro" id="IPR017039">
    <property type="entry name" value="Virul_fac_BrkB"/>
</dbReference>
<dbReference type="NCBIfam" id="NF002457">
    <property type="entry name" value="PRK01637.1"/>
    <property type="match status" value="1"/>
</dbReference>
<dbReference type="NCBIfam" id="TIGR00765">
    <property type="entry name" value="yihY_not_rbn"/>
    <property type="match status" value="1"/>
</dbReference>
<dbReference type="PANTHER" id="PTHR30213">
    <property type="entry name" value="INNER MEMBRANE PROTEIN YHJD"/>
    <property type="match status" value="1"/>
</dbReference>
<dbReference type="PANTHER" id="PTHR30213:SF0">
    <property type="entry name" value="UPF0761 MEMBRANE PROTEIN YIHY"/>
    <property type="match status" value="1"/>
</dbReference>
<dbReference type="Pfam" id="PF03631">
    <property type="entry name" value="Virul_fac_BrkB"/>
    <property type="match status" value="1"/>
</dbReference>
<dbReference type="PIRSF" id="PIRSF035875">
    <property type="entry name" value="RNase_BN"/>
    <property type="match status" value="1"/>
</dbReference>
<proteinExistence type="inferred from homology"/>
<comment type="subcellular location">
    <subcellularLocation>
        <location evidence="1">Cell inner membrane</location>
        <topology evidence="1">Multi-pass membrane protein</topology>
    </subcellularLocation>
</comment>
<comment type="similarity">
    <text evidence="1">Belongs to the UPF0761 family.</text>
</comment>
<protein>
    <recommendedName>
        <fullName evidence="1">UPF0761 membrane protein YihY</fullName>
    </recommendedName>
</protein>
<evidence type="ECO:0000255" key="1">
    <source>
        <dbReference type="HAMAP-Rule" id="MF_00672"/>
    </source>
</evidence>
<keyword id="KW-0997">Cell inner membrane</keyword>
<keyword id="KW-1003">Cell membrane</keyword>
<keyword id="KW-0472">Membrane</keyword>
<keyword id="KW-1185">Reference proteome</keyword>
<keyword id="KW-0812">Transmembrane</keyword>
<keyword id="KW-1133">Transmembrane helix</keyword>
<accession>Q3YV90</accession>
<name>YIHY_SHISS</name>
<sequence length="290" mass="32873">MLKTIQDKARHRTRPLWAWLKLLWQRIDEDNMTTLAGNLAYVSLLSLVPLVAVVFALFAAFPMFSDVSIQLRHFIFANFLPATGDVIQRYIEQFVANSNKMTAVGACGLIVTALLLMYSIDSALNTIWRSKRARPKIYSFAVYWMILTLGPLLAGASLAISSYLFSLRWASDLNTVIDNVLRIFPLLLSWISFWLLYSIVPTIRVPNRDAIVGAFVAALLFEAGKKGFALYITMFPSYQLIYGVLAVIPILFVWVYWTWCIVLLGAEITVTLGEYRKLKQAAEQEEDDEP</sequence>